<keyword id="KW-0007">Acetylation</keyword>
<keyword id="KW-0030">Aminoacyl-tRNA synthetase</keyword>
<keyword id="KW-0067">ATP-binding</keyword>
<keyword id="KW-0963">Cytoplasm</keyword>
<keyword id="KW-0436">Ligase</keyword>
<keyword id="KW-0479">Metal-binding</keyword>
<keyword id="KW-0547">Nucleotide-binding</keyword>
<keyword id="KW-0648">Protein biosynthesis</keyword>
<keyword id="KW-0694">RNA-binding</keyword>
<keyword id="KW-0820">tRNA-binding</keyword>
<keyword id="KW-0862">Zinc</keyword>
<protein>
    <recommendedName>
        <fullName evidence="1">Alanine--tRNA ligase</fullName>
        <ecNumber evidence="1">6.1.1.7</ecNumber>
    </recommendedName>
    <alternativeName>
        <fullName evidence="1">Alanyl-tRNA synthetase</fullName>
        <shortName evidence="1">AlaRS</shortName>
    </alternativeName>
</protein>
<proteinExistence type="inferred from homology"/>
<comment type="function">
    <text evidence="1">Catalyzes the attachment of alanine to tRNA(Ala) in a two-step reaction: alanine is first activated by ATP to form Ala-AMP and then transferred to the acceptor end of tRNA(Ala). Also edits incorrectly charged Ser-tRNA(Ala) and Gly-tRNA(Ala) via its editing domain.</text>
</comment>
<comment type="catalytic activity">
    <reaction evidence="1">
        <text>tRNA(Ala) + L-alanine + ATP = L-alanyl-tRNA(Ala) + AMP + diphosphate</text>
        <dbReference type="Rhea" id="RHEA:12540"/>
        <dbReference type="Rhea" id="RHEA-COMP:9657"/>
        <dbReference type="Rhea" id="RHEA-COMP:9923"/>
        <dbReference type="ChEBI" id="CHEBI:30616"/>
        <dbReference type="ChEBI" id="CHEBI:33019"/>
        <dbReference type="ChEBI" id="CHEBI:57972"/>
        <dbReference type="ChEBI" id="CHEBI:78442"/>
        <dbReference type="ChEBI" id="CHEBI:78497"/>
        <dbReference type="ChEBI" id="CHEBI:456215"/>
        <dbReference type="EC" id="6.1.1.7"/>
    </reaction>
</comment>
<comment type="cofactor">
    <cofactor evidence="1">
        <name>Zn(2+)</name>
        <dbReference type="ChEBI" id="CHEBI:29105"/>
    </cofactor>
    <text evidence="1">Binds 1 zinc ion per subunit.</text>
</comment>
<comment type="subunit">
    <text evidence="1">Homotetramer.</text>
</comment>
<comment type="subcellular location">
    <subcellularLocation>
        <location evidence="1">Cytoplasm</location>
    </subcellularLocation>
</comment>
<comment type="domain">
    <text evidence="1">Consists of three domains; the N-terminal catalytic domain, the editing domain and the C-terminal C-Ala domain. The editing domain removes incorrectly charged amino acids, while the C-Ala domain, along with tRNA(Ala), serves as a bridge to cooperatively bring together the editing and aminoacylation centers thus stimulating deacylation of misacylated tRNAs.</text>
</comment>
<comment type="similarity">
    <text evidence="1">Belongs to the class-II aminoacyl-tRNA synthetase family.</text>
</comment>
<gene>
    <name evidence="1" type="primary">alaS</name>
    <name type="ordered locus">UTI89_C3058</name>
</gene>
<organism>
    <name type="scientific">Escherichia coli (strain UTI89 / UPEC)</name>
    <dbReference type="NCBI Taxonomy" id="364106"/>
    <lineage>
        <taxon>Bacteria</taxon>
        <taxon>Pseudomonadati</taxon>
        <taxon>Pseudomonadota</taxon>
        <taxon>Gammaproteobacteria</taxon>
        <taxon>Enterobacterales</taxon>
        <taxon>Enterobacteriaceae</taxon>
        <taxon>Escherichia</taxon>
    </lineage>
</organism>
<sequence length="876" mass="95933">MSKSTAEIRQAFLDFFHSKGHQVVASSSLVPHNDPTLLFTNAGMNQFKDVFLGLDKRNYSRATTSQRCVRAGGKHNDLENVGYTARHHTFFEMLGNFSFGDYFKHDAIQFAWELLTSEKWFALPKERLWVTVYESDDEAYEIWEKEVGIPRERIIRIGDNKGAPYASDNFWQMGDTGPCGPCTEIFYDHGDHIWGGPPGSPEEDGDRYIEIWNIVFMQFNRQADGTMEPLPKPSVDTGMGLERIAAVLQHVNSNYDIDLFRTLIQAVAKVTGATDLSNKSLRVIADHIRSCAFLIADGVMPSNESRGYVLRRIIRRAVRHGNMLGAKETFFYKLVGPLIDVMGSAGEDLKRQQAQVEQVLKTEEEQFARTLERGLALLDEELAKLSGDTLDGETAFRLYDTYGFPVDLTADVCRERNIKVDEAGFDAAMEEQRRRAREASGFGADYNAMIRVDSASEFKGYDHLELNGKVTALFVDGKAVDAINAGQEAVVVLDQTPFYAESGGQVGDKGELKGANFSFAVEDTQKYGQAIGHIGKLAAGSLKVGDAVQADVDEARRARIRLNHSATHLMHAALRQVLGTHVSQKGSLVNDKVLRFDFSHNEAMKPEEIRAVEDLVNAQIRRNLPIETNIMDLEAAKAKGAMALFGEKYDERVRVLSMGDFSTELCGGTHASRTGDIGLFRIISESGTAAGVRRIEAVTGEGAIATVHADSDRLSEVAHLLKGDSNNLADKVRSVLERTRQLEKELQQLKEQAAAQESANLSSKAIDVNGVKLLVSELSGVEPKMLRTMVDDLKNQLGSTIIVLATVAEGKVSLIAGVSKDVTDRVKAGELIGMVAQQVGGKGGGRPDMAQAGGTDAAALPAALASVKGWVSAKLQ</sequence>
<reference key="1">
    <citation type="journal article" date="2006" name="Proc. Natl. Acad. Sci. U.S.A.">
        <title>Identification of genes subject to positive selection in uropathogenic strains of Escherichia coli: a comparative genomics approach.</title>
        <authorList>
            <person name="Chen S.L."/>
            <person name="Hung C.-S."/>
            <person name="Xu J."/>
            <person name="Reigstad C.S."/>
            <person name="Magrini V."/>
            <person name="Sabo A."/>
            <person name="Blasiar D."/>
            <person name="Bieri T."/>
            <person name="Meyer R.R."/>
            <person name="Ozersky P."/>
            <person name="Armstrong J.R."/>
            <person name="Fulton R.S."/>
            <person name="Latreille J.P."/>
            <person name="Spieth J."/>
            <person name="Hooton T.M."/>
            <person name="Mardis E.R."/>
            <person name="Hultgren S.J."/>
            <person name="Gordon J.I."/>
        </authorList>
    </citation>
    <scope>NUCLEOTIDE SEQUENCE [LARGE SCALE GENOMIC DNA]</scope>
    <source>
        <strain>UTI89 / UPEC</strain>
    </source>
</reference>
<name>SYA_ECOUT</name>
<dbReference type="EC" id="6.1.1.7" evidence="1"/>
<dbReference type="EMBL" id="CP000243">
    <property type="protein sequence ID" value="ABE08510.1"/>
    <property type="molecule type" value="Genomic_DNA"/>
</dbReference>
<dbReference type="RefSeq" id="WP_000047209.1">
    <property type="nucleotide sequence ID" value="NZ_CP064825.1"/>
</dbReference>
<dbReference type="SMR" id="Q1R804"/>
<dbReference type="KEGG" id="eci:UTI89_C3058"/>
<dbReference type="HOGENOM" id="CLU_004485_1_1_6"/>
<dbReference type="Proteomes" id="UP000001952">
    <property type="component" value="Chromosome"/>
</dbReference>
<dbReference type="GO" id="GO:0005829">
    <property type="term" value="C:cytosol"/>
    <property type="evidence" value="ECO:0007669"/>
    <property type="project" value="TreeGrafter"/>
</dbReference>
<dbReference type="GO" id="GO:0004813">
    <property type="term" value="F:alanine-tRNA ligase activity"/>
    <property type="evidence" value="ECO:0007669"/>
    <property type="project" value="UniProtKB-UniRule"/>
</dbReference>
<dbReference type="GO" id="GO:0002161">
    <property type="term" value="F:aminoacyl-tRNA deacylase activity"/>
    <property type="evidence" value="ECO:0007669"/>
    <property type="project" value="TreeGrafter"/>
</dbReference>
<dbReference type="GO" id="GO:0005524">
    <property type="term" value="F:ATP binding"/>
    <property type="evidence" value="ECO:0007669"/>
    <property type="project" value="UniProtKB-UniRule"/>
</dbReference>
<dbReference type="GO" id="GO:0000049">
    <property type="term" value="F:tRNA binding"/>
    <property type="evidence" value="ECO:0007669"/>
    <property type="project" value="UniProtKB-KW"/>
</dbReference>
<dbReference type="GO" id="GO:0008270">
    <property type="term" value="F:zinc ion binding"/>
    <property type="evidence" value="ECO:0007669"/>
    <property type="project" value="UniProtKB-UniRule"/>
</dbReference>
<dbReference type="GO" id="GO:0006419">
    <property type="term" value="P:alanyl-tRNA aminoacylation"/>
    <property type="evidence" value="ECO:0007669"/>
    <property type="project" value="UniProtKB-UniRule"/>
</dbReference>
<dbReference type="GO" id="GO:0045892">
    <property type="term" value="P:negative regulation of DNA-templated transcription"/>
    <property type="evidence" value="ECO:0007669"/>
    <property type="project" value="TreeGrafter"/>
</dbReference>
<dbReference type="CDD" id="cd00673">
    <property type="entry name" value="AlaRS_core"/>
    <property type="match status" value="1"/>
</dbReference>
<dbReference type="FunFam" id="2.40.30.130:FF:000001">
    <property type="entry name" value="Alanine--tRNA ligase"/>
    <property type="match status" value="1"/>
</dbReference>
<dbReference type="FunFam" id="3.10.310.40:FF:000001">
    <property type="entry name" value="Alanine--tRNA ligase"/>
    <property type="match status" value="1"/>
</dbReference>
<dbReference type="FunFam" id="3.30.54.20:FF:000001">
    <property type="entry name" value="Alanine--tRNA ligase"/>
    <property type="match status" value="1"/>
</dbReference>
<dbReference type="FunFam" id="3.30.930.10:FF:000004">
    <property type="entry name" value="Alanine--tRNA ligase"/>
    <property type="match status" value="1"/>
</dbReference>
<dbReference type="FunFam" id="3.30.980.10:FF:000004">
    <property type="entry name" value="Alanine--tRNA ligase, cytoplasmic"/>
    <property type="match status" value="1"/>
</dbReference>
<dbReference type="Gene3D" id="2.40.30.130">
    <property type="match status" value="1"/>
</dbReference>
<dbReference type="Gene3D" id="3.10.310.40">
    <property type="match status" value="1"/>
</dbReference>
<dbReference type="Gene3D" id="3.30.54.20">
    <property type="match status" value="1"/>
</dbReference>
<dbReference type="Gene3D" id="6.10.250.550">
    <property type="match status" value="1"/>
</dbReference>
<dbReference type="Gene3D" id="3.30.930.10">
    <property type="entry name" value="Bira Bifunctional Protein, Domain 2"/>
    <property type="match status" value="1"/>
</dbReference>
<dbReference type="Gene3D" id="3.30.980.10">
    <property type="entry name" value="Threonyl-trna Synthetase, Chain A, domain 2"/>
    <property type="match status" value="1"/>
</dbReference>
<dbReference type="HAMAP" id="MF_00036_B">
    <property type="entry name" value="Ala_tRNA_synth_B"/>
    <property type="match status" value="1"/>
</dbReference>
<dbReference type="InterPro" id="IPR045864">
    <property type="entry name" value="aa-tRNA-synth_II/BPL/LPL"/>
</dbReference>
<dbReference type="InterPro" id="IPR002318">
    <property type="entry name" value="Ala-tRNA-lgiase_IIc"/>
</dbReference>
<dbReference type="InterPro" id="IPR018162">
    <property type="entry name" value="Ala-tRNA-ligase_IIc_anticod-bd"/>
</dbReference>
<dbReference type="InterPro" id="IPR018165">
    <property type="entry name" value="Ala-tRNA-synth_IIc_core"/>
</dbReference>
<dbReference type="InterPro" id="IPR018164">
    <property type="entry name" value="Ala-tRNA-synth_IIc_N"/>
</dbReference>
<dbReference type="InterPro" id="IPR050058">
    <property type="entry name" value="Ala-tRNA_ligase"/>
</dbReference>
<dbReference type="InterPro" id="IPR023033">
    <property type="entry name" value="Ala_tRNA_ligase_euk/bac"/>
</dbReference>
<dbReference type="InterPro" id="IPR003156">
    <property type="entry name" value="DHHA1_dom"/>
</dbReference>
<dbReference type="InterPro" id="IPR018163">
    <property type="entry name" value="Thr/Ala-tRNA-synth_IIc_edit"/>
</dbReference>
<dbReference type="InterPro" id="IPR009000">
    <property type="entry name" value="Transl_B-barrel_sf"/>
</dbReference>
<dbReference type="InterPro" id="IPR012947">
    <property type="entry name" value="tRNA_SAD"/>
</dbReference>
<dbReference type="NCBIfam" id="TIGR00344">
    <property type="entry name" value="alaS"/>
    <property type="match status" value="1"/>
</dbReference>
<dbReference type="PANTHER" id="PTHR11777:SF9">
    <property type="entry name" value="ALANINE--TRNA LIGASE, CYTOPLASMIC"/>
    <property type="match status" value="1"/>
</dbReference>
<dbReference type="PANTHER" id="PTHR11777">
    <property type="entry name" value="ALANYL-TRNA SYNTHETASE"/>
    <property type="match status" value="1"/>
</dbReference>
<dbReference type="Pfam" id="PF02272">
    <property type="entry name" value="DHHA1"/>
    <property type="match status" value="1"/>
</dbReference>
<dbReference type="Pfam" id="PF01411">
    <property type="entry name" value="tRNA-synt_2c"/>
    <property type="match status" value="1"/>
</dbReference>
<dbReference type="Pfam" id="PF07973">
    <property type="entry name" value="tRNA_SAD"/>
    <property type="match status" value="1"/>
</dbReference>
<dbReference type="PRINTS" id="PR00980">
    <property type="entry name" value="TRNASYNTHALA"/>
</dbReference>
<dbReference type="SMART" id="SM00863">
    <property type="entry name" value="tRNA_SAD"/>
    <property type="match status" value="1"/>
</dbReference>
<dbReference type="SUPFAM" id="SSF55681">
    <property type="entry name" value="Class II aaRS and biotin synthetases"/>
    <property type="match status" value="1"/>
</dbReference>
<dbReference type="SUPFAM" id="SSF101353">
    <property type="entry name" value="Putative anticodon-binding domain of alanyl-tRNA synthetase (AlaRS)"/>
    <property type="match status" value="1"/>
</dbReference>
<dbReference type="SUPFAM" id="SSF55186">
    <property type="entry name" value="ThrRS/AlaRS common domain"/>
    <property type="match status" value="1"/>
</dbReference>
<dbReference type="SUPFAM" id="SSF50447">
    <property type="entry name" value="Translation proteins"/>
    <property type="match status" value="1"/>
</dbReference>
<dbReference type="PROSITE" id="PS50860">
    <property type="entry name" value="AA_TRNA_LIGASE_II_ALA"/>
    <property type="match status" value="1"/>
</dbReference>
<feature type="chain" id="PRO_0000347599" description="Alanine--tRNA ligase">
    <location>
        <begin position="1"/>
        <end position="876"/>
    </location>
</feature>
<feature type="binding site" evidence="1">
    <location>
        <position position="564"/>
    </location>
    <ligand>
        <name>Zn(2+)</name>
        <dbReference type="ChEBI" id="CHEBI:29105"/>
    </ligand>
</feature>
<feature type="binding site" evidence="1">
    <location>
        <position position="568"/>
    </location>
    <ligand>
        <name>Zn(2+)</name>
        <dbReference type="ChEBI" id="CHEBI:29105"/>
    </ligand>
</feature>
<feature type="binding site" evidence="1">
    <location>
        <position position="666"/>
    </location>
    <ligand>
        <name>Zn(2+)</name>
        <dbReference type="ChEBI" id="CHEBI:29105"/>
    </ligand>
</feature>
<feature type="binding site" evidence="1">
    <location>
        <position position="670"/>
    </location>
    <ligand>
        <name>Zn(2+)</name>
        <dbReference type="ChEBI" id="CHEBI:29105"/>
    </ligand>
</feature>
<feature type="modified residue" description="N6-acetyllysine" evidence="1">
    <location>
        <position position="74"/>
    </location>
</feature>
<evidence type="ECO:0000255" key="1">
    <source>
        <dbReference type="HAMAP-Rule" id="MF_00036"/>
    </source>
</evidence>
<accession>Q1R804</accession>